<evidence type="ECO:0000250" key="1"/>
<evidence type="ECO:0000305" key="2"/>
<accession>Q9GP32</accession>
<sequence length="363" mass="39727">MSRFVPYLCAEKMKELRENASAIVAPGKGLLAADESTNTIGKRFAAINLENTEENRRAYRELLFTTDPEFAKHISGVILFHETVYQKTKDGKPFVELLRERGVLPGIKVDLGVVPLGGTADECTTQGLDNLAQRCAQYYNDGCRFAKWRCVLKISSHNPSYLAMLENANVLARYAFICQQNGLVPIVEPEVLPDGDHDLETAQRVTEQVLSFVYKALADHHVYLEGTLLKPNMVTCGQSCTKKYSVEDNARATVEALQRTVPVAVPGVVFLSGGQSELDATRNLNAINKYPGKKPWALSFSFGRALQASAIAAWQGKPENVKAGQAEFLQLAKANGAASLGKFEGELKTAAGQKSLFVANHAY</sequence>
<organism>
    <name type="scientific">Echinococcus multilocularis</name>
    <name type="common">Fox tapeworm</name>
    <dbReference type="NCBI Taxonomy" id="6211"/>
    <lineage>
        <taxon>Eukaryota</taxon>
        <taxon>Metazoa</taxon>
        <taxon>Spiralia</taxon>
        <taxon>Lophotrochozoa</taxon>
        <taxon>Platyhelminthes</taxon>
        <taxon>Cestoda</taxon>
        <taxon>Eucestoda</taxon>
        <taxon>Cyclophyllidea</taxon>
        <taxon>Taeniidae</taxon>
        <taxon>Echinococcus</taxon>
    </lineage>
</organism>
<proteinExistence type="evidence at transcript level"/>
<keyword id="KW-0324">Glycolysis</keyword>
<keyword id="KW-0456">Lyase</keyword>
<keyword id="KW-0704">Schiff base</keyword>
<reference key="1">
    <citation type="journal article" date="2000" name="J. Biol. Chem.">
        <title>mRNA trans-splicing in the human parasitic cestode Echinococcus multilocularis.</title>
        <authorList>
            <person name="Brehm K."/>
            <person name="Jensen K."/>
            <person name="Frosch M."/>
        </authorList>
    </citation>
    <scope>NUCLEOTIDE SEQUENCE [MRNA]</scope>
    <source>
        <strain>H-95</strain>
    </source>
</reference>
<gene>
    <name type="primary">FBPA</name>
</gene>
<dbReference type="EC" id="4.1.2.13"/>
<dbReference type="EMBL" id="AJ292376">
    <property type="protein sequence ID" value="CAC18550.1"/>
    <property type="molecule type" value="mRNA"/>
</dbReference>
<dbReference type="SMR" id="Q9GP32"/>
<dbReference type="eggNOG" id="KOG1557">
    <property type="taxonomic scope" value="Eukaryota"/>
</dbReference>
<dbReference type="OrthoDB" id="36455at2759"/>
<dbReference type="UniPathway" id="UPA00109">
    <property type="reaction ID" value="UER00183"/>
</dbReference>
<dbReference type="GO" id="GO:0004332">
    <property type="term" value="F:fructose-bisphosphate aldolase activity"/>
    <property type="evidence" value="ECO:0007669"/>
    <property type="project" value="UniProtKB-EC"/>
</dbReference>
<dbReference type="GO" id="GO:0006096">
    <property type="term" value="P:glycolytic process"/>
    <property type="evidence" value="ECO:0007669"/>
    <property type="project" value="UniProtKB-UniPathway"/>
</dbReference>
<dbReference type="CDD" id="cd00948">
    <property type="entry name" value="FBP_aldolase_I_a"/>
    <property type="match status" value="1"/>
</dbReference>
<dbReference type="FunFam" id="3.20.20.70:FF:000140">
    <property type="entry name" value="Fructose-bisphosphate aldolase"/>
    <property type="match status" value="1"/>
</dbReference>
<dbReference type="Gene3D" id="3.20.20.70">
    <property type="entry name" value="Aldolase class I"/>
    <property type="match status" value="1"/>
</dbReference>
<dbReference type="InterPro" id="IPR029768">
    <property type="entry name" value="Aldolase_I_AS"/>
</dbReference>
<dbReference type="InterPro" id="IPR013785">
    <property type="entry name" value="Aldolase_TIM"/>
</dbReference>
<dbReference type="InterPro" id="IPR000741">
    <property type="entry name" value="FBA_I"/>
</dbReference>
<dbReference type="NCBIfam" id="NF033379">
    <property type="entry name" value="FrucBisAld_I"/>
    <property type="match status" value="1"/>
</dbReference>
<dbReference type="PANTHER" id="PTHR11627">
    <property type="entry name" value="FRUCTOSE-BISPHOSPHATE ALDOLASE"/>
    <property type="match status" value="1"/>
</dbReference>
<dbReference type="Pfam" id="PF00274">
    <property type="entry name" value="Glycolytic"/>
    <property type="match status" value="1"/>
</dbReference>
<dbReference type="SUPFAM" id="SSF51569">
    <property type="entry name" value="Aldolase"/>
    <property type="match status" value="1"/>
</dbReference>
<dbReference type="PROSITE" id="PS00158">
    <property type="entry name" value="ALDOLASE_CLASS_I"/>
    <property type="match status" value="1"/>
</dbReference>
<comment type="catalytic activity">
    <reaction>
        <text>beta-D-fructose 1,6-bisphosphate = D-glyceraldehyde 3-phosphate + dihydroxyacetone phosphate</text>
        <dbReference type="Rhea" id="RHEA:14729"/>
        <dbReference type="ChEBI" id="CHEBI:32966"/>
        <dbReference type="ChEBI" id="CHEBI:57642"/>
        <dbReference type="ChEBI" id="CHEBI:59776"/>
        <dbReference type="EC" id="4.1.2.13"/>
    </reaction>
</comment>
<comment type="pathway">
    <text>Carbohydrate degradation; glycolysis; D-glyceraldehyde 3-phosphate and glycerone phosphate from D-glucose: step 4/4.</text>
</comment>
<comment type="similarity">
    <text evidence="2">Belongs to the class I fructose-bisphosphate aldolase family.</text>
</comment>
<protein>
    <recommendedName>
        <fullName>Fructose-bisphosphate aldolase</fullName>
        <ecNumber>4.1.2.13</ecNumber>
    </recommendedName>
</protein>
<feature type="chain" id="PRO_0000216933" description="Fructose-bisphosphate aldolase">
    <location>
        <begin position="1"/>
        <end position="363"/>
    </location>
</feature>
<feature type="active site" description="Proton acceptor" evidence="1">
    <location>
        <position position="188"/>
    </location>
</feature>
<feature type="active site" description="Schiff-base intermediate with dihydroxyacetone-P" evidence="1">
    <location>
        <position position="230"/>
    </location>
</feature>
<feature type="binding site" evidence="1">
    <location>
        <position position="56"/>
    </location>
    <ligand>
        <name>substrate</name>
    </ligand>
</feature>
<feature type="binding site" evidence="1">
    <location>
        <position position="147"/>
    </location>
    <ligand>
        <name>substrate</name>
    </ligand>
</feature>
<feature type="site" description="Necessary for preference for fructose 1,6-bisphosphate over fructose 1-phosphate">
    <location>
        <position position="363"/>
    </location>
</feature>
<name>ALF_ECHMU</name>